<evidence type="ECO:0000255" key="1">
    <source>
        <dbReference type="HAMAP-Rule" id="MF_00048"/>
    </source>
</evidence>
<feature type="chain" id="PRO_1000057338" description="UPF0102 protein Spro_4337">
    <location>
        <begin position="1"/>
        <end position="117"/>
    </location>
</feature>
<protein>
    <recommendedName>
        <fullName evidence="1">UPF0102 protein Spro_4337</fullName>
    </recommendedName>
</protein>
<reference key="1">
    <citation type="submission" date="2007-09" db="EMBL/GenBank/DDBJ databases">
        <title>Complete sequence of chromosome of Serratia proteamaculans 568.</title>
        <authorList>
            <consortium name="US DOE Joint Genome Institute"/>
            <person name="Copeland A."/>
            <person name="Lucas S."/>
            <person name="Lapidus A."/>
            <person name="Barry K."/>
            <person name="Glavina del Rio T."/>
            <person name="Dalin E."/>
            <person name="Tice H."/>
            <person name="Pitluck S."/>
            <person name="Chain P."/>
            <person name="Malfatti S."/>
            <person name="Shin M."/>
            <person name="Vergez L."/>
            <person name="Schmutz J."/>
            <person name="Larimer F."/>
            <person name="Land M."/>
            <person name="Hauser L."/>
            <person name="Kyrpides N."/>
            <person name="Kim E."/>
            <person name="Taghavi S."/>
            <person name="Newman L."/>
            <person name="Vangronsveld J."/>
            <person name="van der Lelie D."/>
            <person name="Richardson P."/>
        </authorList>
    </citation>
    <scope>NUCLEOTIDE SEQUENCE [LARGE SCALE GENOMIC DNA]</scope>
    <source>
        <strain>568</strain>
    </source>
</reference>
<comment type="similarity">
    <text evidence="1">Belongs to the UPF0102 family.</text>
</comment>
<accession>A8GJZ1</accession>
<gene>
    <name type="ordered locus">Spro_4337</name>
</gene>
<sequence length="117" mass="12887">MSQRAIGAGYELQARHYLERAGLTFCAANVALRGGELDLIMRDGQTWVFVEVRYRRSDAFGGAAASVTYRKQQRLLHAAAVWLAGRGASFDTSSCRFDVLAITGSQLEWIPNAFNAD</sequence>
<organism>
    <name type="scientific">Serratia proteamaculans (strain 568)</name>
    <dbReference type="NCBI Taxonomy" id="399741"/>
    <lineage>
        <taxon>Bacteria</taxon>
        <taxon>Pseudomonadati</taxon>
        <taxon>Pseudomonadota</taxon>
        <taxon>Gammaproteobacteria</taxon>
        <taxon>Enterobacterales</taxon>
        <taxon>Yersiniaceae</taxon>
        <taxon>Serratia</taxon>
    </lineage>
</organism>
<proteinExistence type="inferred from homology"/>
<name>Y4337_SERP5</name>
<dbReference type="EMBL" id="CP000826">
    <property type="protein sequence ID" value="ABV43431.1"/>
    <property type="molecule type" value="Genomic_DNA"/>
</dbReference>
<dbReference type="SMR" id="A8GJZ1"/>
<dbReference type="STRING" id="399741.Spro_4337"/>
<dbReference type="KEGG" id="spe:Spro_4337"/>
<dbReference type="eggNOG" id="COG0792">
    <property type="taxonomic scope" value="Bacteria"/>
</dbReference>
<dbReference type="HOGENOM" id="CLU_115353_1_0_6"/>
<dbReference type="GO" id="GO:0003676">
    <property type="term" value="F:nucleic acid binding"/>
    <property type="evidence" value="ECO:0007669"/>
    <property type="project" value="InterPro"/>
</dbReference>
<dbReference type="Gene3D" id="3.40.1350.10">
    <property type="match status" value="1"/>
</dbReference>
<dbReference type="HAMAP" id="MF_00048">
    <property type="entry name" value="UPF0102"/>
    <property type="match status" value="1"/>
</dbReference>
<dbReference type="InterPro" id="IPR011335">
    <property type="entry name" value="Restrct_endonuc-II-like"/>
</dbReference>
<dbReference type="InterPro" id="IPR011856">
    <property type="entry name" value="tRNA_endonuc-like_dom_sf"/>
</dbReference>
<dbReference type="InterPro" id="IPR003509">
    <property type="entry name" value="UPF0102_YraN-like"/>
</dbReference>
<dbReference type="NCBIfam" id="NF009150">
    <property type="entry name" value="PRK12497.1-3"/>
    <property type="match status" value="1"/>
</dbReference>
<dbReference type="NCBIfam" id="TIGR00252">
    <property type="entry name" value="YraN family protein"/>
    <property type="match status" value="1"/>
</dbReference>
<dbReference type="PANTHER" id="PTHR34039">
    <property type="entry name" value="UPF0102 PROTEIN YRAN"/>
    <property type="match status" value="1"/>
</dbReference>
<dbReference type="PANTHER" id="PTHR34039:SF1">
    <property type="entry name" value="UPF0102 PROTEIN YRAN"/>
    <property type="match status" value="1"/>
</dbReference>
<dbReference type="Pfam" id="PF02021">
    <property type="entry name" value="UPF0102"/>
    <property type="match status" value="1"/>
</dbReference>
<dbReference type="SUPFAM" id="SSF52980">
    <property type="entry name" value="Restriction endonuclease-like"/>
    <property type="match status" value="1"/>
</dbReference>